<organism>
    <name type="scientific">Streptococcus equi subsp. zooepidemicus (strain MGCS10565)</name>
    <dbReference type="NCBI Taxonomy" id="552526"/>
    <lineage>
        <taxon>Bacteria</taxon>
        <taxon>Bacillati</taxon>
        <taxon>Bacillota</taxon>
        <taxon>Bacilli</taxon>
        <taxon>Lactobacillales</taxon>
        <taxon>Streptococcaceae</taxon>
        <taxon>Streptococcus</taxon>
    </lineage>
</organism>
<gene>
    <name evidence="1" type="primary">deoB</name>
    <name type="ordered locus">Sez_1164</name>
</gene>
<evidence type="ECO:0000255" key="1">
    <source>
        <dbReference type="HAMAP-Rule" id="MF_00740"/>
    </source>
</evidence>
<reference key="1">
    <citation type="journal article" date="2008" name="PLoS ONE">
        <title>Genome sequence of a lancefield group C Streptococcus zooepidemicus strain causing epidemic nephritis: new information about an old disease.</title>
        <authorList>
            <person name="Beres S.B."/>
            <person name="Sesso R."/>
            <person name="Pinto S.W.L."/>
            <person name="Hoe N.P."/>
            <person name="Porcella S.F."/>
            <person name="Deleo F.R."/>
            <person name="Musser J.M."/>
        </authorList>
    </citation>
    <scope>NUCLEOTIDE SEQUENCE [LARGE SCALE GENOMIC DNA]</scope>
    <source>
        <strain>MGCS10565</strain>
    </source>
</reference>
<proteinExistence type="inferred from homology"/>
<protein>
    <recommendedName>
        <fullName evidence="1">Phosphopentomutase</fullName>
        <ecNumber evidence="1">5.4.2.7</ecNumber>
    </recommendedName>
    <alternativeName>
        <fullName evidence="1">Phosphodeoxyribomutase</fullName>
    </alternativeName>
</protein>
<comment type="function">
    <text evidence="1">Isomerase that catalyzes the conversion of deoxy-ribose 1-phosphate (dRib-1-P) and ribose 1-phosphate (Rib-1-P) to deoxy-ribose 5-phosphate (dRib-5-P) and ribose 5-phosphate (Rib-5-P), respectively.</text>
</comment>
<comment type="catalytic activity">
    <reaction evidence="1">
        <text>2-deoxy-alpha-D-ribose 1-phosphate = 2-deoxy-D-ribose 5-phosphate</text>
        <dbReference type="Rhea" id="RHEA:27658"/>
        <dbReference type="ChEBI" id="CHEBI:57259"/>
        <dbReference type="ChEBI" id="CHEBI:62877"/>
        <dbReference type="EC" id="5.4.2.7"/>
    </reaction>
</comment>
<comment type="catalytic activity">
    <reaction evidence="1">
        <text>alpha-D-ribose 1-phosphate = D-ribose 5-phosphate</text>
        <dbReference type="Rhea" id="RHEA:18793"/>
        <dbReference type="ChEBI" id="CHEBI:57720"/>
        <dbReference type="ChEBI" id="CHEBI:78346"/>
        <dbReference type="EC" id="5.4.2.7"/>
    </reaction>
</comment>
<comment type="cofactor">
    <cofactor evidence="1">
        <name>Mn(2+)</name>
        <dbReference type="ChEBI" id="CHEBI:29035"/>
    </cofactor>
    <text evidence="1">Binds 2 manganese ions.</text>
</comment>
<comment type="pathway">
    <text evidence="1">Carbohydrate degradation; 2-deoxy-D-ribose 1-phosphate degradation; D-glyceraldehyde 3-phosphate and acetaldehyde from 2-deoxy-alpha-D-ribose 1-phosphate: step 1/2.</text>
</comment>
<comment type="subcellular location">
    <subcellularLocation>
        <location evidence="1">Cytoplasm</location>
    </subcellularLocation>
</comment>
<comment type="similarity">
    <text evidence="1">Belongs to the phosphopentomutase family.</text>
</comment>
<dbReference type="EC" id="5.4.2.7" evidence="1"/>
<dbReference type="EMBL" id="CP001129">
    <property type="protein sequence ID" value="ACG62513.1"/>
    <property type="molecule type" value="Genomic_DNA"/>
</dbReference>
<dbReference type="RefSeq" id="WP_012515778.1">
    <property type="nucleotide sequence ID" value="NC_011134.1"/>
</dbReference>
<dbReference type="SMR" id="B4U3E6"/>
<dbReference type="KEGG" id="sez:Sez_1164"/>
<dbReference type="HOGENOM" id="CLU_053861_0_0_9"/>
<dbReference type="UniPathway" id="UPA00002">
    <property type="reaction ID" value="UER00467"/>
</dbReference>
<dbReference type="Proteomes" id="UP000001873">
    <property type="component" value="Chromosome"/>
</dbReference>
<dbReference type="GO" id="GO:0005829">
    <property type="term" value="C:cytosol"/>
    <property type="evidence" value="ECO:0007669"/>
    <property type="project" value="TreeGrafter"/>
</dbReference>
<dbReference type="GO" id="GO:0000287">
    <property type="term" value="F:magnesium ion binding"/>
    <property type="evidence" value="ECO:0007669"/>
    <property type="project" value="InterPro"/>
</dbReference>
<dbReference type="GO" id="GO:0030145">
    <property type="term" value="F:manganese ion binding"/>
    <property type="evidence" value="ECO:0007669"/>
    <property type="project" value="UniProtKB-UniRule"/>
</dbReference>
<dbReference type="GO" id="GO:0008973">
    <property type="term" value="F:phosphopentomutase activity"/>
    <property type="evidence" value="ECO:0007669"/>
    <property type="project" value="UniProtKB-UniRule"/>
</dbReference>
<dbReference type="GO" id="GO:0006018">
    <property type="term" value="P:2-deoxyribose 1-phosphate catabolic process"/>
    <property type="evidence" value="ECO:0007669"/>
    <property type="project" value="UniProtKB-UniRule"/>
</dbReference>
<dbReference type="GO" id="GO:0006015">
    <property type="term" value="P:5-phosphoribose 1-diphosphate biosynthetic process"/>
    <property type="evidence" value="ECO:0007669"/>
    <property type="project" value="UniProtKB-UniPathway"/>
</dbReference>
<dbReference type="GO" id="GO:0043094">
    <property type="term" value="P:metabolic compound salvage"/>
    <property type="evidence" value="ECO:0007669"/>
    <property type="project" value="InterPro"/>
</dbReference>
<dbReference type="GO" id="GO:0009117">
    <property type="term" value="P:nucleotide metabolic process"/>
    <property type="evidence" value="ECO:0007669"/>
    <property type="project" value="InterPro"/>
</dbReference>
<dbReference type="CDD" id="cd16009">
    <property type="entry name" value="PPM"/>
    <property type="match status" value="1"/>
</dbReference>
<dbReference type="FunFam" id="3.30.70.1250:FF:000001">
    <property type="entry name" value="Phosphopentomutase"/>
    <property type="match status" value="1"/>
</dbReference>
<dbReference type="Gene3D" id="3.40.720.10">
    <property type="entry name" value="Alkaline Phosphatase, subunit A"/>
    <property type="match status" value="1"/>
</dbReference>
<dbReference type="Gene3D" id="3.30.70.1250">
    <property type="entry name" value="Phosphopentomutase"/>
    <property type="match status" value="1"/>
</dbReference>
<dbReference type="HAMAP" id="MF_00740">
    <property type="entry name" value="Phosphopentomut"/>
    <property type="match status" value="1"/>
</dbReference>
<dbReference type="InterPro" id="IPR017850">
    <property type="entry name" value="Alkaline_phosphatase_core_sf"/>
</dbReference>
<dbReference type="InterPro" id="IPR010045">
    <property type="entry name" value="DeoB"/>
</dbReference>
<dbReference type="InterPro" id="IPR006124">
    <property type="entry name" value="Metalloenzyme"/>
</dbReference>
<dbReference type="InterPro" id="IPR024052">
    <property type="entry name" value="Phosphopentomutase_DeoB_cap_sf"/>
</dbReference>
<dbReference type="NCBIfam" id="TIGR01696">
    <property type="entry name" value="deoB"/>
    <property type="match status" value="1"/>
</dbReference>
<dbReference type="NCBIfam" id="NF003766">
    <property type="entry name" value="PRK05362.1"/>
    <property type="match status" value="1"/>
</dbReference>
<dbReference type="PANTHER" id="PTHR21110">
    <property type="entry name" value="PHOSPHOPENTOMUTASE"/>
    <property type="match status" value="1"/>
</dbReference>
<dbReference type="PANTHER" id="PTHR21110:SF0">
    <property type="entry name" value="PHOSPHOPENTOMUTASE"/>
    <property type="match status" value="1"/>
</dbReference>
<dbReference type="Pfam" id="PF01676">
    <property type="entry name" value="Metalloenzyme"/>
    <property type="match status" value="1"/>
</dbReference>
<dbReference type="PIRSF" id="PIRSF001491">
    <property type="entry name" value="Ppentomutase"/>
    <property type="match status" value="1"/>
</dbReference>
<dbReference type="SUPFAM" id="SSF53649">
    <property type="entry name" value="Alkaline phosphatase-like"/>
    <property type="match status" value="1"/>
</dbReference>
<dbReference type="SUPFAM" id="SSF143856">
    <property type="entry name" value="DeoB insert domain-like"/>
    <property type="match status" value="1"/>
</dbReference>
<keyword id="KW-0963">Cytoplasm</keyword>
<keyword id="KW-0413">Isomerase</keyword>
<keyword id="KW-0464">Manganese</keyword>
<keyword id="KW-0479">Metal-binding</keyword>
<accession>B4U3E6</accession>
<name>DEOB_STREM</name>
<feature type="chain" id="PRO_1000133102" description="Phosphopentomutase">
    <location>
        <begin position="1"/>
        <end position="403"/>
    </location>
</feature>
<feature type="binding site" evidence="1">
    <location>
        <position position="13"/>
    </location>
    <ligand>
        <name>Mn(2+)</name>
        <dbReference type="ChEBI" id="CHEBI:29035"/>
        <label>1</label>
    </ligand>
</feature>
<feature type="binding site" evidence="1">
    <location>
        <position position="298"/>
    </location>
    <ligand>
        <name>Mn(2+)</name>
        <dbReference type="ChEBI" id="CHEBI:29035"/>
        <label>2</label>
    </ligand>
</feature>
<feature type="binding site" evidence="1">
    <location>
        <position position="303"/>
    </location>
    <ligand>
        <name>Mn(2+)</name>
        <dbReference type="ChEBI" id="CHEBI:29035"/>
        <label>2</label>
    </ligand>
</feature>
<feature type="binding site" evidence="1">
    <location>
        <position position="339"/>
    </location>
    <ligand>
        <name>Mn(2+)</name>
        <dbReference type="ChEBI" id="CHEBI:29035"/>
        <label>1</label>
    </ligand>
</feature>
<feature type="binding site" evidence="1">
    <location>
        <position position="340"/>
    </location>
    <ligand>
        <name>Mn(2+)</name>
        <dbReference type="ChEBI" id="CHEBI:29035"/>
        <label>1</label>
    </ligand>
</feature>
<feature type="binding site" evidence="1">
    <location>
        <position position="351"/>
    </location>
    <ligand>
        <name>Mn(2+)</name>
        <dbReference type="ChEBI" id="CHEBI:29035"/>
        <label>2</label>
    </ligand>
</feature>
<sequence length="403" mass="43975">MSKFNRIHLVVLDSVGIGAAPDADKFFNAGVADTDSDTLGHISETAGLAVPNMAKIGLGHIPRPVPLKTVPAEADPTGYVTKLEEVSLGKDTMTGHWEIMGLNITEPFDTFWDGFPEEIIQKIEAFSGRKVIREANKPYSGTKVIDDFGPRQMETGELIVYTSADPVLQIAAHEEVIPIEELYRICEYARSITLERPALLGRIIARPYVGEPGNFTRTANRRDYAVSPFQDTVLNKLADAGISTYAVGKINDIFNGSGITNDMGHNKSNSHGIDTLIKTLQLPAFTKGLSFTNLVDFDASFGHRRDPEGYRDCLHEFDRRLPEIIANMKDDDLLLITADHGNDPTYAGTDHTREYIPLLAYSASCTGAGVIPQGHFADISATIAENFGVDTAMIGTSFLADLV</sequence>